<evidence type="ECO:0000250" key="1">
    <source>
        <dbReference type="UniProtKB" id="Q61160"/>
    </source>
</evidence>
<evidence type="ECO:0000255" key="2">
    <source>
        <dbReference type="PROSITE-ProRule" id="PRU00064"/>
    </source>
</evidence>
<evidence type="ECO:0000255" key="3">
    <source>
        <dbReference type="PROSITE-ProRule" id="PRU00065"/>
    </source>
</evidence>
<evidence type="ECO:0000256" key="4">
    <source>
        <dbReference type="SAM" id="MobiDB-lite"/>
    </source>
</evidence>
<evidence type="ECO:0000269" key="5">
    <source>
    </source>
</evidence>
<evidence type="ECO:0000269" key="6">
    <source>
    </source>
</evidence>
<evidence type="ECO:0000269" key="7">
    <source>
    </source>
</evidence>
<evidence type="ECO:0000269" key="8">
    <source>
    </source>
</evidence>
<evidence type="ECO:0000269" key="9">
    <source>
    </source>
</evidence>
<evidence type="ECO:0000269" key="10">
    <source>
    </source>
</evidence>
<evidence type="ECO:0000269" key="11">
    <source>
    </source>
</evidence>
<evidence type="ECO:0000269" key="12">
    <source>
    </source>
</evidence>
<evidence type="ECO:0000269" key="13">
    <source>
    </source>
</evidence>
<evidence type="ECO:0000269" key="14">
    <source>
    </source>
</evidence>
<evidence type="ECO:0000269" key="15">
    <source>
    </source>
</evidence>
<evidence type="ECO:0000269" key="16">
    <source>
    </source>
</evidence>
<evidence type="ECO:0000269" key="17">
    <source>
    </source>
</evidence>
<evidence type="ECO:0000269" key="18">
    <source>
    </source>
</evidence>
<evidence type="ECO:0000269" key="19">
    <source>
    </source>
</evidence>
<evidence type="ECO:0000269" key="20">
    <source>
    </source>
</evidence>
<evidence type="ECO:0000269" key="21">
    <source>
    </source>
</evidence>
<evidence type="ECO:0000269" key="22">
    <source>
    </source>
</evidence>
<evidence type="ECO:0000269" key="23">
    <source>
    </source>
</evidence>
<evidence type="ECO:0000269" key="24">
    <source>
    </source>
</evidence>
<evidence type="ECO:0000303" key="25">
    <source>
    </source>
</evidence>
<evidence type="ECO:0000303" key="26">
    <source>
    </source>
</evidence>
<evidence type="ECO:0000303" key="27">
    <source ref="3"/>
</evidence>
<evidence type="ECO:0000305" key="28"/>
<evidence type="ECO:0000305" key="29">
    <source>
    </source>
</evidence>
<evidence type="ECO:0000312" key="30">
    <source>
        <dbReference type="HGNC" id="HGNC:3573"/>
    </source>
</evidence>
<evidence type="ECO:0007744" key="31">
    <source>
        <dbReference type="PDB" id="6ACI"/>
    </source>
</evidence>
<evidence type="ECO:0007744" key="32">
    <source>
    </source>
</evidence>
<evidence type="ECO:0007744" key="33">
    <source>
    </source>
</evidence>
<evidence type="ECO:0007744" key="34">
    <source>
    </source>
</evidence>
<evidence type="ECO:0007829" key="35">
    <source>
        <dbReference type="PDB" id="1E3Y"/>
    </source>
</evidence>
<evidence type="ECO:0007829" key="36">
    <source>
        <dbReference type="PDB" id="1E41"/>
    </source>
</evidence>
<evidence type="ECO:0007829" key="37">
    <source>
        <dbReference type="PDB" id="2GF5"/>
    </source>
</evidence>
<evidence type="ECO:0007829" key="38">
    <source>
        <dbReference type="PDB" id="6ACI"/>
    </source>
</evidence>
<evidence type="ECO:0007829" key="39">
    <source>
        <dbReference type="PDB" id="8YD7"/>
    </source>
</evidence>
<accession>Q13158</accession>
<accession>Q14866</accession>
<accession>Q6IBR4</accession>
<gene>
    <name evidence="26 30" type="primary">FADD</name>
    <name evidence="25" type="synonym">MORT1</name>
    <name evidence="27" type="ORF">GIG3</name>
</gene>
<protein>
    <recommendedName>
        <fullName evidence="26">FAS-associated death domain protein</fullName>
    </recommendedName>
    <alternativeName>
        <fullName evidence="26">FAS-associating death domain-containing protein</fullName>
    </alternativeName>
    <alternativeName>
        <fullName evidence="27">Growth-inhibiting gene 3 protein</fullName>
    </alternativeName>
    <alternativeName>
        <fullName evidence="25">Mediator of receptor induced toxicity</fullName>
    </alternativeName>
</protein>
<keyword id="KW-0002">3D-structure</keyword>
<keyword id="KW-0053">Apoptosis</keyword>
<keyword id="KW-0963">Cytoplasm</keyword>
<keyword id="KW-0225">Disease variant</keyword>
<keyword id="KW-0325">Glycoprotein</keyword>
<keyword id="KW-0945">Host-virus interaction</keyword>
<keyword id="KW-0391">Immunity</keyword>
<keyword id="KW-0399">Innate immunity</keyword>
<keyword id="KW-0597">Phosphoprotein</keyword>
<keyword id="KW-1267">Proteomics identification</keyword>
<keyword id="KW-1185">Reference proteome</keyword>
<sequence>MDPFLVLLHSVSSSLSSSELTELKFLCLGRVGKRKLERVQSGLDLFSMLLEQNDLEPGHTELLRELLASLRRHDLLRRVDDFEAGAAAGAAPGEEDLCAAFNVICDNVGKDWRRLARQLKVSDTKIDSIEDRYPRNLTERVRESLRIWKNTEKENATVAHLVGALRSCQMNLVADLVQEVQQARDLQNRSGAMSPMSWNSDASTSEAS</sequence>
<comment type="function">
    <text evidence="11 14 15 16 17 18 19 23 24">Apoptotic adapter molecule that recruits caspases CASP8 or CASP10 to the activated FAS/CD95 or TNFRSF1A/TNFR-1 receptors (PubMed:16762833, PubMed:19118384, PubMed:20935634, PubMed:23955153, PubMed:24025841, PubMed:7538907, PubMed:9184224). The resulting aggregate called the death-inducing signaling complex (DISC) performs CASP8 proteolytic activation (PubMed:16762833, PubMed:19118384, PubMed:20935634, PubMed:7538907, PubMed:9184224). Active CASP8 initiates the subsequent cascade of caspases mediating apoptosis (PubMed:16762833). Involved in interferon-mediated antiviral immune response, playing a role in the positive regulation of interferon signaling (PubMed:21109225, PubMed:24204270).</text>
</comment>
<comment type="subunit">
    <text evidence="1 5 6 7 9 10 11 13 14 15 16 19 24">Can self-associate (PubMed:19118384, PubMed:20935634). Component of the AIM2 PANoptosome complex, a multiprotein complex that drives inflammatory cell death (PANoptosis) (By similarity). Component of the death-induced signaling complex (DISC) composed of cell surface receptor FAS/CD95 or TNFRSF1A, adapter protein FADD and the CASP8 protease; recruitment of CASP8 to the complex is required for processing of CASP8 into the p18 and p10 subunits (PubMed:16762833, PubMed:9184224). Interacts (via death domain) with FAS (via death domain) (PubMed:16762833, PubMed:20935634, PubMed:21109225). Interacts directly (via DED domain) with NOL3 (via CARD domain); inhibits death-inducing signaling complex (DISC) assembly by inhibiting the increase in FAS-FADD binding induced by FAS activation (By similarity). Interacts with CFLAR, PEA15 and MBD4 (PubMed:10442631, PubMed:12702765). When phosphorylated, part of a complex containing HIPK3 and FAS (PubMed:11034606). May interact with MAVS/IPS1 (PubMed:16127453). Interacts with MOCV v-CFLAR protein and PIDD1 (PubMed:10825539). Interacts with RIPK1 and TRADD (By similarity). Interacts with stimulated TNFRSF10B (PubMed:18846110). Interacts with DDX24 (PubMed:24204270).</text>
</comment>
<comment type="subunit">
    <text evidence="12">(Microbial infection) Interacts with human papillomavirus 16/HPV16 protein E6.</text>
</comment>
<comment type="subunit">
    <text evidence="8">(Microbial infection) Interacts with molluscum contagiosum virus proteins MC159L/v-CFLAR and MC160L.</text>
</comment>
<comment type="interaction">
    <interactant intactId="EBI-494804">
        <id>Q13158</id>
    </interactant>
    <interactant intactId="EBI-742279">
        <id>P62324</id>
        <label>BTG1</label>
    </interactant>
    <organismsDiffer>false</organismsDiffer>
    <experiments>5</experiments>
</comment>
<comment type="interaction">
    <interactant intactId="EBI-494804">
        <id>Q13158</id>
    </interactant>
    <interactant intactId="EBI-78060">
        <id>Q14790</id>
        <label>CASP8</label>
    </interactant>
    <organismsDiffer>false</organismsDiffer>
    <experiments>46</experiments>
</comment>
<comment type="interaction">
    <interactant intactId="EBI-494804">
        <id>Q13158</id>
    </interactant>
    <interactant intactId="EBI-288309">
        <id>Q14790-1</id>
        <label>CASP8</label>
    </interactant>
    <organismsDiffer>false</organismsDiffer>
    <experiments>5</experiments>
</comment>
<comment type="interaction">
    <interactant intactId="EBI-494804">
        <id>Q13158</id>
    </interactant>
    <interactant intactId="EBI-288326">
        <id>Q14790-5</id>
        <label>CASP8</label>
    </interactant>
    <organismsDiffer>false</organismsDiffer>
    <experiments>4</experiments>
</comment>
<comment type="interaction">
    <interactant intactId="EBI-494804">
        <id>Q13158</id>
    </interactant>
    <interactant intactId="EBI-742054">
        <id>Q96D03</id>
        <label>DDIT4L</label>
    </interactant>
    <organismsDiffer>false</organismsDiffer>
    <experiments>3</experiments>
</comment>
<comment type="interaction">
    <interactant intactId="EBI-494804">
        <id>Q13158</id>
    </interactant>
    <interactant intactId="EBI-494804">
        <id>Q13158</id>
        <label>FADD</label>
    </interactant>
    <organismsDiffer>false</organismsDiffer>
    <experiments>12</experiments>
</comment>
<comment type="interaction">
    <interactant intactId="EBI-494804">
        <id>Q13158</id>
    </interactant>
    <interactant intactId="EBI-10220102">
        <id>B7ZLH0</id>
        <label>FAM22F</label>
    </interactant>
    <organismsDiffer>false</organismsDiffer>
    <experiments>3</experiments>
</comment>
<comment type="interaction">
    <interactant intactId="EBI-494804">
        <id>Q13158</id>
    </interactant>
    <interactant intactId="EBI-494743">
        <id>P25445</id>
        <label>FAS</label>
    </interactant>
    <organismsDiffer>false</organismsDiffer>
    <experiments>22</experiments>
</comment>
<comment type="interaction">
    <interactant intactId="EBI-494804">
        <id>Q13158</id>
    </interactant>
    <interactant intactId="EBI-15749113">
        <id>P25445-1</id>
        <label>FAS</label>
    </interactant>
    <organismsDiffer>false</organismsDiffer>
    <experiments>17</experiments>
</comment>
<comment type="interaction">
    <interactant intactId="EBI-494804">
        <id>Q13158</id>
    </interactant>
    <interactant intactId="EBI-495538">
        <id>P48023</id>
        <label>FASLG</label>
    </interactant>
    <organismsDiffer>false</organismsDiffer>
    <experiments>4</experiments>
</comment>
<comment type="interaction">
    <interactant intactId="EBI-494804">
        <id>Q13158</id>
    </interactant>
    <interactant intactId="EBI-5323863">
        <id>Q5S007</id>
        <label>LRRK2</label>
    </interactant>
    <organismsDiffer>false</organismsDiffer>
    <experiments>4</experiments>
</comment>
<comment type="interaction">
    <interactant intactId="EBI-494804">
        <id>Q13158</id>
    </interactant>
    <interactant intactId="EBI-348011">
        <id>O95243</id>
        <label>MBD4</label>
    </interactant>
    <organismsDiffer>false</organismsDiffer>
    <experiments>6</experiments>
</comment>
<comment type="interaction">
    <interactant intactId="EBI-494804">
        <id>Q13158</id>
    </interactant>
    <interactant intactId="EBI-447677">
        <id>Q99836</id>
        <label>MYD88</label>
    </interactant>
    <organismsDiffer>false</organismsDiffer>
    <experiments>3</experiments>
</comment>
<comment type="interaction">
    <interactant intactId="EBI-494804">
        <id>Q13158</id>
    </interactant>
    <interactant intactId="EBI-1164361">
        <id>Q99497</id>
        <label>PARK7</label>
    </interactant>
    <organismsDiffer>false</organismsDiffer>
    <experiments>9</experiments>
</comment>
<comment type="interaction">
    <interactant intactId="EBI-494804">
        <id>Q13158</id>
    </interactant>
    <interactant intactId="EBI-476768">
        <id>P53350</id>
        <label>PLK1</label>
    </interactant>
    <organismsDiffer>false</organismsDiffer>
    <experiments>9</experiments>
</comment>
<comment type="interaction">
    <interactant intactId="EBI-494804">
        <id>Q13158</id>
    </interactant>
    <interactant intactId="EBI-358507">
        <id>Q13546</id>
        <label>RIPK1</label>
    </interactant>
    <organismsDiffer>false</organismsDiffer>
    <experiments>12</experiments>
</comment>
<comment type="interaction">
    <interactant intactId="EBI-494804">
        <id>Q13158</id>
    </interactant>
    <interactant intactId="EBI-2340927">
        <id>P78317</id>
        <label>RNF4</label>
    </interactant>
    <organismsDiffer>false</organismsDiffer>
    <experiments>5</experiments>
</comment>
<comment type="interaction">
    <interactant intactId="EBI-494804">
        <id>Q13158</id>
    </interactant>
    <interactant intactId="EBI-727004">
        <id>O00560</id>
        <label>SDCBP</label>
    </interactant>
    <organismsDiffer>false</organismsDiffer>
    <experiments>6</experiments>
</comment>
<comment type="interaction">
    <interactant intactId="EBI-494804">
        <id>Q13158</id>
    </interactant>
    <interactant intactId="EBI-710310">
        <id>Q15560</id>
        <label>TCEA2</label>
    </interactant>
    <organismsDiffer>false</organismsDiffer>
    <experiments>3</experiments>
</comment>
<comment type="interaction">
    <interactant intactId="EBI-494804">
        <id>Q13158</id>
    </interactant>
    <interactant intactId="EBI-359215">
        <id>Q15628</id>
        <label>TRADD</label>
    </interactant>
    <organismsDiffer>false</organismsDiffer>
    <experiments>7</experiments>
</comment>
<comment type="interaction">
    <interactant intactId="EBI-494804">
        <id>Q13158</id>
    </interactant>
    <interactant intactId="EBI-10180829">
        <id>Q7KZS0</id>
        <label>UBE2I</label>
    </interactant>
    <organismsDiffer>false</organismsDiffer>
    <experiments>3</experiments>
</comment>
<comment type="interaction">
    <interactant intactId="EBI-494804">
        <id>Q13158</id>
    </interactant>
    <interactant intactId="EBI-748373">
        <id>Q6PEW1</id>
        <label>ZCCHC12</label>
    </interactant>
    <organismsDiffer>false</organismsDiffer>
    <experiments>3</experiments>
</comment>
<comment type="interaction">
    <interactant intactId="EBI-494804">
        <id>Q13158</id>
    </interactant>
    <interactant intactId="EBI-17634549">
        <id>Q9UJ78-2</id>
        <label>ZMYM5</label>
    </interactant>
    <organismsDiffer>false</organismsDiffer>
    <experiments>3</experiments>
</comment>
<comment type="interaction">
    <interactant intactId="EBI-494804">
        <id>Q13158</id>
    </interactant>
    <interactant intactId="EBI-296206">
        <id>P25446</id>
        <label>Fas</label>
    </interactant>
    <organismsDiffer>true</organismsDiffer>
    <experiments>8</experiments>
</comment>
<comment type="interaction">
    <interactant intactId="EBI-494804">
        <id>Q13158</id>
    </interactant>
    <interactant intactId="EBI-16070376">
        <id>B7UI21</id>
        <label>nleB1</label>
    </interactant>
    <organismsDiffer>true</organismsDiffer>
    <experiments>7</experiments>
</comment>
<comment type="subcellular location">
    <subcellularLocation>
        <location evidence="19">Cytoplasm</location>
    </subcellularLocation>
</comment>
<comment type="tissue specificity">
    <text evidence="23">Expressed in a wide variety of tissues, except for peripheral blood mononuclear leukocytes.</text>
</comment>
<comment type="domain">
    <text evidence="14">Contains a death domain involved in the binding of the corresponding domain within Fas receptor.</text>
</comment>
<comment type="domain">
    <text evidence="14">The interaction between the FAS and FADD death domains is crucial for the formation of the death-inducing signaling complex (DISC).</text>
</comment>
<comment type="PTM">
    <text evidence="17 18 20 21">(Microbial infection) Glycosylated at Arg-117 by enteropathogenic E.coli protein NleB1, C.rodentium protein NleB and S.typhimurium protein Ssek1: arginine GlcNAcylation prevents recruitment of caspase-8 or caspase-10 to the activated Fas (CD95) or TNFR-1 receptors.</text>
</comment>
<comment type="disease" evidence="16">
    <disease id="DI-03003">
        <name>Infections, recurrent, associated with encephalopathy, hepatic dysfunction and cardiovascular malformations</name>
        <acronym>IEHDCM</acronym>
        <description>A condition with biological features of autoimmune lymphoproliferative syndrome such as high-circulating CD4(-)CD8(-)TCR-alpha-beta(+) T-cell counts, and elevated IL10 and FASL levels. Affected individuals suffer from recurrent, stereotypical episodes of fever, encephalopathy, and mild liver dysfunction sometimes accompanied by generalized seizures. The episodes can be triggered by varicella zoster virus (VZV), measles mumps rubella (MMR) attenuated vaccine, parainfluenza virus, and Epstein-Barr virus (EBV).</description>
        <dbReference type="MIM" id="613759"/>
    </disease>
    <text>The disease is caused by variants affecting the gene represented in this entry.</text>
</comment>
<name>FADD_HUMAN</name>
<dbReference type="EMBL" id="U24231">
    <property type="protein sequence ID" value="AAA86517.1"/>
    <property type="molecule type" value="mRNA"/>
</dbReference>
<dbReference type="EMBL" id="X84709">
    <property type="protein sequence ID" value="CAA59197.1"/>
    <property type="molecule type" value="mRNA"/>
</dbReference>
<dbReference type="EMBL" id="AY423721">
    <property type="protein sequence ID" value="AAS00484.1"/>
    <property type="molecule type" value="mRNA"/>
</dbReference>
<dbReference type="EMBL" id="AK291005">
    <property type="protein sequence ID" value="BAF83694.1"/>
    <property type="molecule type" value="mRNA"/>
</dbReference>
<dbReference type="EMBL" id="BT006927">
    <property type="protein sequence ID" value="AAP35573.1"/>
    <property type="molecule type" value="mRNA"/>
</dbReference>
<dbReference type="EMBL" id="CR456738">
    <property type="protein sequence ID" value="CAG33019.1"/>
    <property type="molecule type" value="mRNA"/>
</dbReference>
<dbReference type="EMBL" id="DQ449938">
    <property type="protein sequence ID" value="ABD96828.1"/>
    <property type="molecule type" value="Genomic_DNA"/>
</dbReference>
<dbReference type="EMBL" id="CH471076">
    <property type="protein sequence ID" value="EAW74761.1"/>
    <property type="molecule type" value="Genomic_DNA"/>
</dbReference>
<dbReference type="EMBL" id="BC000334">
    <property type="protein sequence ID" value="AAH00334.1"/>
    <property type="molecule type" value="mRNA"/>
</dbReference>
<dbReference type="CCDS" id="CCDS8196.1"/>
<dbReference type="PIR" id="A56912">
    <property type="entry name" value="A56912"/>
</dbReference>
<dbReference type="RefSeq" id="NP_003815.1">
    <property type="nucleotide sequence ID" value="NM_003824.4"/>
</dbReference>
<dbReference type="PDB" id="1A1W">
    <property type="method" value="NMR"/>
    <property type="chains" value="A=1-83"/>
</dbReference>
<dbReference type="PDB" id="1A1Z">
    <property type="method" value="NMR"/>
    <property type="chains" value="A=1-83"/>
</dbReference>
<dbReference type="PDB" id="1E3Y">
    <property type="method" value="NMR"/>
    <property type="chains" value="A=93-192"/>
</dbReference>
<dbReference type="PDB" id="1E41">
    <property type="method" value="NMR"/>
    <property type="chains" value="A=93-192"/>
</dbReference>
<dbReference type="PDB" id="2GF5">
    <property type="method" value="NMR"/>
    <property type="chains" value="A=2-191"/>
</dbReference>
<dbReference type="PDB" id="3EZQ">
    <property type="method" value="X-ray"/>
    <property type="resolution" value="2.73 A"/>
    <property type="chains" value="B/D/F/H/J/L/N/P=93-208"/>
</dbReference>
<dbReference type="PDB" id="3OQ9">
    <property type="method" value="X-ray"/>
    <property type="resolution" value="6.80 A"/>
    <property type="chains" value="H/I/J/K/L=93-184"/>
</dbReference>
<dbReference type="PDB" id="6ACI">
    <property type="method" value="X-ray"/>
    <property type="resolution" value="1.87 A"/>
    <property type="chains" value="H=93-184"/>
</dbReference>
<dbReference type="PDB" id="7LXC">
    <property type="method" value="NMR"/>
    <property type="chains" value="A=16-42"/>
</dbReference>
<dbReference type="PDB" id="8YBX">
    <property type="method" value="EM"/>
    <property type="resolution" value="3.68 A"/>
    <property type="chains" value="L/Q/R=1-208"/>
</dbReference>
<dbReference type="PDB" id="8YD7">
    <property type="method" value="X-ray"/>
    <property type="resolution" value="3.32 A"/>
    <property type="chains" value="L=1-208"/>
</dbReference>
<dbReference type="PDB" id="8YD8">
    <property type="method" value="X-ray"/>
    <property type="resolution" value="3.11 A"/>
    <property type="chains" value="L=1-208"/>
</dbReference>
<dbReference type="PDB" id="8YNI">
    <property type="method" value="EM"/>
    <property type="resolution" value="3.66 A"/>
    <property type="chains" value="L/Q/R=1-208"/>
</dbReference>
<dbReference type="PDBsum" id="1A1W"/>
<dbReference type="PDBsum" id="1A1Z"/>
<dbReference type="PDBsum" id="1E3Y"/>
<dbReference type="PDBsum" id="1E41"/>
<dbReference type="PDBsum" id="2GF5"/>
<dbReference type="PDBsum" id="3EZQ"/>
<dbReference type="PDBsum" id="3OQ9"/>
<dbReference type="PDBsum" id="6ACI"/>
<dbReference type="PDBsum" id="7LXC"/>
<dbReference type="PDBsum" id="8YBX"/>
<dbReference type="PDBsum" id="8YD7"/>
<dbReference type="PDBsum" id="8YD8"/>
<dbReference type="PDBsum" id="8YNI"/>
<dbReference type="BMRB" id="Q13158"/>
<dbReference type="EMDB" id="EMD-39126"/>
<dbReference type="EMDB" id="EMD-39424"/>
<dbReference type="SMR" id="Q13158"/>
<dbReference type="BioGRID" id="114302">
    <property type="interactions" value="120"/>
</dbReference>
<dbReference type="ComplexPortal" id="CPX-1907">
    <property type="entry name" value="Ripoptosome"/>
</dbReference>
<dbReference type="CORUM" id="Q13158"/>
<dbReference type="DIP" id="DIP-286N"/>
<dbReference type="FunCoup" id="Q13158">
    <property type="interactions" value="971"/>
</dbReference>
<dbReference type="IntAct" id="Q13158">
    <property type="interactions" value="83"/>
</dbReference>
<dbReference type="MINT" id="Q13158"/>
<dbReference type="STRING" id="9606.ENSP00000301838"/>
<dbReference type="GlyCosmos" id="Q13158">
    <property type="glycosylation" value="1 site, No reported glycans"/>
</dbReference>
<dbReference type="GlyGen" id="Q13158">
    <property type="glycosylation" value="2 sites, 1 N-linked glycan (1 site), 1 O-linked glycan (1 site)"/>
</dbReference>
<dbReference type="iPTMnet" id="Q13158"/>
<dbReference type="MetOSite" id="Q13158"/>
<dbReference type="PhosphoSitePlus" id="Q13158"/>
<dbReference type="BioMuta" id="FADD"/>
<dbReference type="DMDM" id="2498355"/>
<dbReference type="jPOST" id="Q13158"/>
<dbReference type="MassIVE" id="Q13158"/>
<dbReference type="PaxDb" id="9606-ENSP00000301838"/>
<dbReference type="PeptideAtlas" id="Q13158"/>
<dbReference type="ProteomicsDB" id="59197"/>
<dbReference type="Pumba" id="Q13158"/>
<dbReference type="Antibodypedia" id="698">
    <property type="antibodies" value="1037 antibodies from 42 providers"/>
</dbReference>
<dbReference type="DNASU" id="8772"/>
<dbReference type="Ensembl" id="ENST00000301838.5">
    <property type="protein sequence ID" value="ENSP00000301838.5"/>
    <property type="gene ID" value="ENSG00000168040.5"/>
</dbReference>
<dbReference type="GeneID" id="8772"/>
<dbReference type="KEGG" id="hsa:8772"/>
<dbReference type="MANE-Select" id="ENST00000301838.5">
    <property type="protein sequence ID" value="ENSP00000301838.5"/>
    <property type="RefSeq nucleotide sequence ID" value="NM_003824.4"/>
    <property type="RefSeq protein sequence ID" value="NP_003815.1"/>
</dbReference>
<dbReference type="UCSC" id="uc001opm.3">
    <property type="organism name" value="human"/>
</dbReference>
<dbReference type="AGR" id="HGNC:3573"/>
<dbReference type="CTD" id="8772"/>
<dbReference type="DisGeNET" id="8772"/>
<dbReference type="GeneCards" id="FADD"/>
<dbReference type="HGNC" id="HGNC:3573">
    <property type="gene designation" value="FADD"/>
</dbReference>
<dbReference type="HPA" id="ENSG00000168040">
    <property type="expression patterns" value="Low tissue specificity"/>
</dbReference>
<dbReference type="MalaCards" id="FADD"/>
<dbReference type="MIM" id="602457">
    <property type="type" value="gene"/>
</dbReference>
<dbReference type="MIM" id="613759">
    <property type="type" value="phenotype"/>
</dbReference>
<dbReference type="neXtProt" id="NX_Q13158"/>
<dbReference type="OpenTargets" id="ENSG00000168040"/>
<dbReference type="Orphanet" id="306550">
    <property type="disease" value="FADD-related immunodeficiency"/>
</dbReference>
<dbReference type="Orphanet" id="99806">
    <property type="disease" value="Oculootodental syndrome"/>
</dbReference>
<dbReference type="PharmGKB" id="PA27972"/>
<dbReference type="VEuPathDB" id="HostDB:ENSG00000168040"/>
<dbReference type="eggNOG" id="ENOG502S2RV">
    <property type="taxonomic scope" value="Eukaryota"/>
</dbReference>
<dbReference type="GeneTree" id="ENSGT00390000002105"/>
<dbReference type="HOGENOM" id="CLU_087961_0_0_1"/>
<dbReference type="InParanoid" id="Q13158"/>
<dbReference type="OMA" id="CKMNLVA"/>
<dbReference type="OrthoDB" id="100767at2759"/>
<dbReference type="PAN-GO" id="Q13158">
    <property type="GO annotations" value="6 GO annotations based on evolutionary models"/>
</dbReference>
<dbReference type="PhylomeDB" id="Q13158"/>
<dbReference type="TreeFam" id="TF102046"/>
<dbReference type="PathwayCommons" id="Q13158"/>
<dbReference type="Reactome" id="R-HSA-140534">
    <property type="pathway name" value="Caspase activation via Death Receptors in the presence of ligand"/>
</dbReference>
<dbReference type="Reactome" id="R-HSA-2562578">
    <property type="pathway name" value="TRIF-mediated programmed cell death"/>
</dbReference>
<dbReference type="Reactome" id="R-HSA-3371378">
    <property type="pathway name" value="Regulation by c-FLIP"/>
</dbReference>
<dbReference type="Reactome" id="R-HSA-5213460">
    <property type="pathway name" value="RIPK1-mediated regulated necrosis"/>
</dbReference>
<dbReference type="Reactome" id="R-HSA-5218900">
    <property type="pathway name" value="CASP8 activity is inhibited"/>
</dbReference>
<dbReference type="Reactome" id="R-HSA-5357786">
    <property type="pathway name" value="TNFR1-induced proapoptotic signaling"/>
</dbReference>
<dbReference type="Reactome" id="R-HSA-5357905">
    <property type="pathway name" value="Regulation of TNFR1 signaling"/>
</dbReference>
<dbReference type="Reactome" id="R-HSA-5675482">
    <property type="pathway name" value="Regulation of necroptotic cell death"/>
</dbReference>
<dbReference type="Reactome" id="R-HSA-69416">
    <property type="pathway name" value="Dimerization of procaspase-8"/>
</dbReference>
<dbReference type="Reactome" id="R-HSA-75157">
    <property type="pathway name" value="FasL/ CD95L signaling"/>
</dbReference>
<dbReference type="Reactome" id="R-HSA-75158">
    <property type="pathway name" value="TRAIL signaling"/>
</dbReference>
<dbReference type="Reactome" id="R-HSA-9013957">
    <property type="pathway name" value="TLR3-mediated TICAM1-dependent programmed cell death"/>
</dbReference>
<dbReference type="Reactome" id="R-HSA-933543">
    <property type="pathway name" value="NF-kB activation through FADD/RIP-1 pathway mediated by caspase-8 and -10"/>
</dbReference>
<dbReference type="Reactome" id="R-HSA-9693928">
    <property type="pathway name" value="Defective RIPK1-mediated regulated necrosis"/>
</dbReference>
<dbReference type="SignaLink" id="Q13158"/>
<dbReference type="SIGNOR" id="Q13158"/>
<dbReference type="BioGRID-ORCS" id="8772">
    <property type="hits" value="70 hits in 1158 CRISPR screens"/>
</dbReference>
<dbReference type="ChiTaRS" id="FADD">
    <property type="organism name" value="human"/>
</dbReference>
<dbReference type="EvolutionaryTrace" id="Q13158"/>
<dbReference type="GeneWiki" id="FADD"/>
<dbReference type="GenomeRNAi" id="8772"/>
<dbReference type="Pharos" id="Q13158">
    <property type="development level" value="Tbio"/>
</dbReference>
<dbReference type="PRO" id="PR:Q13158"/>
<dbReference type="Proteomes" id="UP000005640">
    <property type="component" value="Chromosome 11"/>
</dbReference>
<dbReference type="RNAct" id="Q13158">
    <property type="molecule type" value="protein"/>
</dbReference>
<dbReference type="Bgee" id="ENSG00000168040">
    <property type="expression patterns" value="Expressed in endometrium epithelium and 181 other cell types or tissues"/>
</dbReference>
<dbReference type="GO" id="GO:0031265">
    <property type="term" value="C:CD95 death-inducing signaling complex"/>
    <property type="evidence" value="ECO:0000314"/>
    <property type="project" value="UniProtKB"/>
</dbReference>
<dbReference type="GO" id="GO:0044297">
    <property type="term" value="C:cell body"/>
    <property type="evidence" value="ECO:0007669"/>
    <property type="project" value="Ensembl"/>
</dbReference>
<dbReference type="GO" id="GO:0005737">
    <property type="term" value="C:cytoplasm"/>
    <property type="evidence" value="ECO:0000314"/>
    <property type="project" value="UniProtKB"/>
</dbReference>
<dbReference type="GO" id="GO:0009898">
    <property type="term" value="C:cytoplasmic side of plasma membrane"/>
    <property type="evidence" value="ECO:0000305"/>
    <property type="project" value="UniProt"/>
</dbReference>
<dbReference type="GO" id="GO:0005829">
    <property type="term" value="C:cytosol"/>
    <property type="evidence" value="ECO:0000314"/>
    <property type="project" value="ParkinsonsUK-UCL"/>
</dbReference>
<dbReference type="GO" id="GO:0031264">
    <property type="term" value="C:death-inducing signaling complex"/>
    <property type="evidence" value="ECO:0000314"/>
    <property type="project" value="UniProtKB"/>
</dbReference>
<dbReference type="GO" id="GO:0005886">
    <property type="term" value="C:plasma membrane"/>
    <property type="evidence" value="ECO:0000314"/>
    <property type="project" value="UniProtKB"/>
</dbReference>
<dbReference type="GO" id="GO:0097342">
    <property type="term" value="C:ripoptosome"/>
    <property type="evidence" value="ECO:0000314"/>
    <property type="project" value="UniProtKB"/>
</dbReference>
<dbReference type="GO" id="GO:0089720">
    <property type="term" value="F:caspase binding"/>
    <property type="evidence" value="ECO:0000314"/>
    <property type="project" value="UniProtKB"/>
</dbReference>
<dbReference type="GO" id="GO:0035877">
    <property type="term" value="F:death effector domain binding"/>
    <property type="evidence" value="ECO:0000353"/>
    <property type="project" value="UniProtKB"/>
</dbReference>
<dbReference type="GO" id="GO:0005123">
    <property type="term" value="F:death receptor binding"/>
    <property type="evidence" value="ECO:0000318"/>
    <property type="project" value="GO_Central"/>
</dbReference>
<dbReference type="GO" id="GO:0042802">
    <property type="term" value="F:identical protein binding"/>
    <property type="evidence" value="ECO:0000353"/>
    <property type="project" value="IntAct"/>
</dbReference>
<dbReference type="GO" id="GO:0002020">
    <property type="term" value="F:protease binding"/>
    <property type="evidence" value="ECO:0000353"/>
    <property type="project" value="UniProtKB"/>
</dbReference>
<dbReference type="GO" id="GO:0044877">
    <property type="term" value="F:protein-containing complex binding"/>
    <property type="evidence" value="ECO:0007669"/>
    <property type="project" value="Ensembl"/>
</dbReference>
<dbReference type="GO" id="GO:0030674">
    <property type="term" value="F:protein-macromolecule adaptor activity"/>
    <property type="evidence" value="ECO:0000314"/>
    <property type="project" value="UniProt"/>
</dbReference>
<dbReference type="GO" id="GO:0033612">
    <property type="term" value="F:receptor serine/threonine kinase binding"/>
    <property type="evidence" value="ECO:0007669"/>
    <property type="project" value="Ensembl"/>
</dbReference>
<dbReference type="GO" id="GO:0035591">
    <property type="term" value="F:signaling adaptor activity"/>
    <property type="evidence" value="ECO:0007669"/>
    <property type="project" value="Ensembl"/>
</dbReference>
<dbReference type="GO" id="GO:0005164">
    <property type="term" value="F:tumor necrosis factor receptor binding"/>
    <property type="evidence" value="ECO:0007669"/>
    <property type="project" value="Ensembl"/>
</dbReference>
<dbReference type="GO" id="GO:0032813">
    <property type="term" value="F:tumor necrosis factor receptor superfamily binding"/>
    <property type="evidence" value="ECO:0000353"/>
    <property type="project" value="UniProtKB"/>
</dbReference>
<dbReference type="GO" id="GO:0006915">
    <property type="term" value="P:apoptotic process"/>
    <property type="evidence" value="ECO:0000315"/>
    <property type="project" value="UniProtKB"/>
</dbReference>
<dbReference type="GO" id="GO:0097190">
    <property type="term" value="P:apoptotic signaling pathway"/>
    <property type="evidence" value="ECO:0000314"/>
    <property type="project" value="BHF-UCL"/>
</dbReference>
<dbReference type="GO" id="GO:0048148">
    <property type="term" value="P:behavioral response to cocaine"/>
    <property type="evidence" value="ECO:0007669"/>
    <property type="project" value="Ensembl"/>
</dbReference>
<dbReference type="GO" id="GO:0071260">
    <property type="term" value="P:cellular response to mechanical stimulus"/>
    <property type="evidence" value="ECO:0000270"/>
    <property type="project" value="UniProtKB"/>
</dbReference>
<dbReference type="GO" id="GO:0071550">
    <property type="term" value="P:death-inducing signaling complex assembly"/>
    <property type="evidence" value="ECO:0000314"/>
    <property type="project" value="UniProtKB"/>
</dbReference>
<dbReference type="GO" id="GO:0051607">
    <property type="term" value="P:defense response to virus"/>
    <property type="evidence" value="ECO:0000315"/>
    <property type="project" value="UniProtKB"/>
</dbReference>
<dbReference type="GO" id="GO:0097191">
    <property type="term" value="P:extrinsic apoptotic signaling pathway"/>
    <property type="evidence" value="ECO:0000314"/>
    <property type="project" value="UniProtKB"/>
</dbReference>
<dbReference type="GO" id="GO:0097192">
    <property type="term" value="P:extrinsic apoptotic signaling pathway in absence of ligand"/>
    <property type="evidence" value="ECO:0007669"/>
    <property type="project" value="Ensembl"/>
</dbReference>
<dbReference type="GO" id="GO:0008625">
    <property type="term" value="P:extrinsic apoptotic signaling pathway via death domain receptors"/>
    <property type="evidence" value="ECO:0000314"/>
    <property type="project" value="UniProtKB"/>
</dbReference>
<dbReference type="GO" id="GO:0045087">
    <property type="term" value="P:innate immune response"/>
    <property type="evidence" value="ECO:0007669"/>
    <property type="project" value="UniProtKB-KW"/>
</dbReference>
<dbReference type="GO" id="GO:0001822">
    <property type="term" value="P:kidney development"/>
    <property type="evidence" value="ECO:0007669"/>
    <property type="project" value="Ensembl"/>
</dbReference>
<dbReference type="GO" id="GO:0048535">
    <property type="term" value="P:lymph node development"/>
    <property type="evidence" value="ECO:0000250"/>
    <property type="project" value="UniProtKB"/>
</dbReference>
<dbReference type="GO" id="GO:0097049">
    <property type="term" value="P:motor neuron apoptotic process"/>
    <property type="evidence" value="ECO:0007669"/>
    <property type="project" value="Ensembl"/>
</dbReference>
<dbReference type="GO" id="GO:0097527">
    <property type="term" value="P:necroptotic signaling pathway"/>
    <property type="evidence" value="ECO:0000315"/>
    <property type="project" value="BHF-UCL"/>
</dbReference>
<dbReference type="GO" id="GO:0070236">
    <property type="term" value="P:negative regulation of activation-induced cell death of T cells"/>
    <property type="evidence" value="ECO:0000250"/>
    <property type="project" value="UniProtKB"/>
</dbReference>
<dbReference type="GO" id="GO:0060546">
    <property type="term" value="P:negative regulation of necroptotic process"/>
    <property type="evidence" value="ECO:0007669"/>
    <property type="project" value="Ensembl"/>
</dbReference>
<dbReference type="GO" id="GO:0042104">
    <property type="term" value="P:positive regulation of activated T cell proliferation"/>
    <property type="evidence" value="ECO:0000250"/>
    <property type="project" value="UniProtKB"/>
</dbReference>
<dbReference type="GO" id="GO:0002821">
    <property type="term" value="P:positive regulation of adaptive immune response"/>
    <property type="evidence" value="ECO:0000250"/>
    <property type="project" value="UniProtKB"/>
</dbReference>
<dbReference type="GO" id="GO:0043065">
    <property type="term" value="P:positive regulation of apoptotic process"/>
    <property type="evidence" value="ECO:0000314"/>
    <property type="project" value="UniProtKB"/>
</dbReference>
<dbReference type="GO" id="GO:0043123">
    <property type="term" value="P:positive regulation of canonical NF-kappaB signal transduction"/>
    <property type="evidence" value="ECO:0000270"/>
    <property type="project" value="UniProtKB"/>
</dbReference>
<dbReference type="GO" id="GO:2000454">
    <property type="term" value="P:positive regulation of CD8-positive, alpha-beta cytotoxic T cell extravasation"/>
    <property type="evidence" value="ECO:0000250"/>
    <property type="project" value="UniProtKB"/>
</dbReference>
<dbReference type="GO" id="GO:1900119">
    <property type="term" value="P:positive regulation of execution phase of apoptosis"/>
    <property type="evidence" value="ECO:0007669"/>
    <property type="project" value="Ensembl"/>
</dbReference>
<dbReference type="GO" id="GO:2001238">
    <property type="term" value="P:positive regulation of extrinsic apoptotic signaling pathway"/>
    <property type="evidence" value="ECO:0000315"/>
    <property type="project" value="UniProtKB"/>
</dbReference>
<dbReference type="GO" id="GO:0045089">
    <property type="term" value="P:positive regulation of innate immune response"/>
    <property type="evidence" value="ECO:0000318"/>
    <property type="project" value="GO_Central"/>
</dbReference>
<dbReference type="GO" id="GO:0032757">
    <property type="term" value="P:positive regulation of interleukin-8 production"/>
    <property type="evidence" value="ECO:0000314"/>
    <property type="project" value="BHF-UCL"/>
</dbReference>
<dbReference type="GO" id="GO:0045651">
    <property type="term" value="P:positive regulation of macrophage differentiation"/>
    <property type="evidence" value="ECO:0000315"/>
    <property type="project" value="UniProtKB"/>
</dbReference>
<dbReference type="GO" id="GO:0045862">
    <property type="term" value="P:positive regulation of proteolysis"/>
    <property type="evidence" value="ECO:0000314"/>
    <property type="project" value="BHF-UCL"/>
</dbReference>
<dbReference type="GO" id="GO:0001916">
    <property type="term" value="P:positive regulation of T cell mediated cytotoxicity"/>
    <property type="evidence" value="ECO:0000250"/>
    <property type="project" value="UniProtKB"/>
</dbReference>
<dbReference type="GO" id="GO:0045944">
    <property type="term" value="P:positive regulation of transcription by RNA polymerase II"/>
    <property type="evidence" value="ECO:0000314"/>
    <property type="project" value="BHF-UCL"/>
</dbReference>
<dbReference type="GO" id="GO:0032760">
    <property type="term" value="P:positive regulation of tumor necrosis factor production"/>
    <property type="evidence" value="ECO:0000314"/>
    <property type="project" value="BHF-UCL"/>
</dbReference>
<dbReference type="GO" id="GO:0060340">
    <property type="term" value="P:positive regulation of type I interferon-mediated signaling pathway"/>
    <property type="evidence" value="ECO:0000315"/>
    <property type="project" value="UniProtKB"/>
</dbReference>
<dbReference type="GO" id="GO:0032729">
    <property type="term" value="P:positive regulation of type II interferon production"/>
    <property type="evidence" value="ECO:0000250"/>
    <property type="project" value="UniProtKB"/>
</dbReference>
<dbReference type="GO" id="GO:0048536">
    <property type="term" value="P:spleen development"/>
    <property type="evidence" value="ECO:0000250"/>
    <property type="project" value="UniProtKB"/>
</dbReference>
<dbReference type="GO" id="GO:0033077">
    <property type="term" value="P:T cell differentiation in thymus"/>
    <property type="evidence" value="ECO:0000250"/>
    <property type="project" value="UniProtKB"/>
</dbReference>
<dbReference type="GO" id="GO:0043029">
    <property type="term" value="P:T cell homeostasis"/>
    <property type="evidence" value="ECO:0000250"/>
    <property type="project" value="UniProtKB"/>
</dbReference>
<dbReference type="GO" id="GO:0048538">
    <property type="term" value="P:thymus development"/>
    <property type="evidence" value="ECO:0000250"/>
    <property type="project" value="UniProtKB"/>
</dbReference>
<dbReference type="GO" id="GO:0036462">
    <property type="term" value="P:TRAIL-activated apoptotic signaling pathway"/>
    <property type="evidence" value="ECO:0000314"/>
    <property type="project" value="ParkinsonsUK-UCL"/>
</dbReference>
<dbReference type="CDD" id="cd08306">
    <property type="entry name" value="Death_FADD"/>
    <property type="match status" value="1"/>
</dbReference>
<dbReference type="CDD" id="cd08336">
    <property type="entry name" value="DED_FADD"/>
    <property type="match status" value="1"/>
</dbReference>
<dbReference type="FunFam" id="1.10.533.10:FF:000059">
    <property type="entry name" value="Fas-associated via death domain"/>
    <property type="match status" value="1"/>
</dbReference>
<dbReference type="FunFam" id="1.10.533.10:FF:000062">
    <property type="entry name" value="Fas-associated via death domain"/>
    <property type="match status" value="1"/>
</dbReference>
<dbReference type="Gene3D" id="1.10.533.10">
    <property type="entry name" value="Death Domain, Fas"/>
    <property type="match status" value="2"/>
</dbReference>
<dbReference type="InterPro" id="IPR011029">
    <property type="entry name" value="DEATH-like_dom_sf"/>
</dbReference>
<dbReference type="InterPro" id="IPR000488">
    <property type="entry name" value="Death_dom"/>
</dbReference>
<dbReference type="InterPro" id="IPR001875">
    <property type="entry name" value="DED_dom"/>
</dbReference>
<dbReference type="InterPro" id="IPR016729">
    <property type="entry name" value="FADD"/>
</dbReference>
<dbReference type="InterPro" id="IPR049634">
    <property type="entry name" value="FADD_vert"/>
</dbReference>
<dbReference type="PANTHER" id="PTHR15077:SF10">
    <property type="entry name" value="FAS-ASSOCIATED DEATH DOMAIN PROTEIN"/>
    <property type="match status" value="1"/>
</dbReference>
<dbReference type="PANTHER" id="PTHR15077">
    <property type="entry name" value="FAS-ASSOCIATING DEATH DOMAIN-CONTAINING PROTEIN FADD"/>
    <property type="match status" value="1"/>
</dbReference>
<dbReference type="Pfam" id="PF00531">
    <property type="entry name" value="Death"/>
    <property type="match status" value="1"/>
</dbReference>
<dbReference type="Pfam" id="PF01335">
    <property type="entry name" value="DED"/>
    <property type="match status" value="1"/>
</dbReference>
<dbReference type="PIRSF" id="PIRSF018586">
    <property type="entry name" value="FADD"/>
    <property type="match status" value="1"/>
</dbReference>
<dbReference type="SMART" id="SM00005">
    <property type="entry name" value="DEATH"/>
    <property type="match status" value="1"/>
</dbReference>
<dbReference type="SMART" id="SM00031">
    <property type="entry name" value="DED"/>
    <property type="match status" value="1"/>
</dbReference>
<dbReference type="SUPFAM" id="SSF47986">
    <property type="entry name" value="DEATH domain"/>
    <property type="match status" value="1"/>
</dbReference>
<dbReference type="PROSITE" id="PS50017">
    <property type="entry name" value="DEATH_DOMAIN"/>
    <property type="match status" value="1"/>
</dbReference>
<dbReference type="PROSITE" id="PS50168">
    <property type="entry name" value="DED"/>
    <property type="match status" value="1"/>
</dbReference>
<proteinExistence type="evidence at protein level"/>
<reference key="1">
    <citation type="journal article" date="1995" name="Cell">
        <title>FADD, a novel death domain-containing protein, interacts with the death domain of Fas and initiates apoptosis.</title>
        <authorList>
            <person name="Chinnaiyan A.M."/>
            <person name="O'Rourke K."/>
            <person name="Tewari M."/>
            <person name="Dixit V.M."/>
        </authorList>
    </citation>
    <scope>NUCLEOTIDE SEQUENCE [MRNA]</scope>
    <scope>FUNCTION</scope>
    <scope>TISSUE SPECIFICITY</scope>
    <source>
        <tissue>Umbilical vein endothelial cell</tissue>
    </source>
</reference>
<reference key="2">
    <citation type="journal article" date="1995" name="J. Biol. Chem.">
        <title>A novel protein that interacts with the death domain of Fas/APO1 contains a sequence motif related to the death domain.</title>
        <authorList>
            <person name="Boldin M.P."/>
            <person name="Varfolomeev E.E."/>
            <person name="Pancer Z."/>
            <person name="Mett I.L."/>
            <person name="Camonis J.H."/>
            <person name="Wallach D."/>
        </authorList>
    </citation>
    <scope>NUCLEOTIDE SEQUENCE [MRNA]</scope>
</reference>
<reference key="3">
    <citation type="submission" date="2003-09" db="EMBL/GenBank/DDBJ databases">
        <title>Identification of a human growth inhibition gene 3 (GIG3).</title>
        <authorList>
            <person name="Kim J.W."/>
        </authorList>
    </citation>
    <scope>NUCLEOTIDE SEQUENCE [LARGE SCALE MRNA]</scope>
</reference>
<reference key="4">
    <citation type="journal article" date="2004" name="Nat. Genet.">
        <title>Complete sequencing and characterization of 21,243 full-length human cDNAs.</title>
        <authorList>
            <person name="Ota T."/>
            <person name="Suzuki Y."/>
            <person name="Nishikawa T."/>
            <person name="Otsuki T."/>
            <person name="Sugiyama T."/>
            <person name="Irie R."/>
            <person name="Wakamatsu A."/>
            <person name="Hayashi K."/>
            <person name="Sato H."/>
            <person name="Nagai K."/>
            <person name="Kimura K."/>
            <person name="Makita H."/>
            <person name="Sekine M."/>
            <person name="Obayashi M."/>
            <person name="Nishi T."/>
            <person name="Shibahara T."/>
            <person name="Tanaka T."/>
            <person name="Ishii S."/>
            <person name="Yamamoto J."/>
            <person name="Saito K."/>
            <person name="Kawai Y."/>
            <person name="Isono Y."/>
            <person name="Nakamura Y."/>
            <person name="Nagahari K."/>
            <person name="Murakami K."/>
            <person name="Yasuda T."/>
            <person name="Iwayanagi T."/>
            <person name="Wagatsuma M."/>
            <person name="Shiratori A."/>
            <person name="Sudo H."/>
            <person name="Hosoiri T."/>
            <person name="Kaku Y."/>
            <person name="Kodaira H."/>
            <person name="Kondo H."/>
            <person name="Sugawara M."/>
            <person name="Takahashi M."/>
            <person name="Kanda K."/>
            <person name="Yokoi T."/>
            <person name="Furuya T."/>
            <person name="Kikkawa E."/>
            <person name="Omura Y."/>
            <person name="Abe K."/>
            <person name="Kamihara K."/>
            <person name="Katsuta N."/>
            <person name="Sato K."/>
            <person name="Tanikawa M."/>
            <person name="Yamazaki M."/>
            <person name="Ninomiya K."/>
            <person name="Ishibashi T."/>
            <person name="Yamashita H."/>
            <person name="Murakawa K."/>
            <person name="Fujimori K."/>
            <person name="Tanai H."/>
            <person name="Kimata M."/>
            <person name="Watanabe M."/>
            <person name="Hiraoka S."/>
            <person name="Chiba Y."/>
            <person name="Ishida S."/>
            <person name="Ono Y."/>
            <person name="Takiguchi S."/>
            <person name="Watanabe S."/>
            <person name="Yosida M."/>
            <person name="Hotuta T."/>
            <person name="Kusano J."/>
            <person name="Kanehori K."/>
            <person name="Takahashi-Fujii A."/>
            <person name="Hara H."/>
            <person name="Tanase T.-O."/>
            <person name="Nomura Y."/>
            <person name="Togiya S."/>
            <person name="Komai F."/>
            <person name="Hara R."/>
            <person name="Takeuchi K."/>
            <person name="Arita M."/>
            <person name="Imose N."/>
            <person name="Musashino K."/>
            <person name="Yuuki H."/>
            <person name="Oshima A."/>
            <person name="Sasaki N."/>
            <person name="Aotsuka S."/>
            <person name="Yoshikawa Y."/>
            <person name="Matsunawa H."/>
            <person name="Ichihara T."/>
            <person name="Shiohata N."/>
            <person name="Sano S."/>
            <person name="Moriya S."/>
            <person name="Momiyama H."/>
            <person name="Satoh N."/>
            <person name="Takami S."/>
            <person name="Terashima Y."/>
            <person name="Suzuki O."/>
            <person name="Nakagawa S."/>
            <person name="Senoh A."/>
            <person name="Mizoguchi H."/>
            <person name="Goto Y."/>
            <person name="Shimizu F."/>
            <person name="Wakebe H."/>
            <person name="Hishigaki H."/>
            <person name="Watanabe T."/>
            <person name="Sugiyama A."/>
            <person name="Takemoto M."/>
            <person name="Kawakami B."/>
            <person name="Yamazaki M."/>
            <person name="Watanabe K."/>
            <person name="Kumagai A."/>
            <person name="Itakura S."/>
            <person name="Fukuzumi Y."/>
            <person name="Fujimori Y."/>
            <person name="Komiyama M."/>
            <person name="Tashiro H."/>
            <person name="Tanigami A."/>
            <person name="Fujiwara T."/>
            <person name="Ono T."/>
            <person name="Yamada K."/>
            <person name="Fujii Y."/>
            <person name="Ozaki K."/>
            <person name="Hirao M."/>
            <person name="Ohmori Y."/>
            <person name="Kawabata A."/>
            <person name="Hikiji T."/>
            <person name="Kobatake N."/>
            <person name="Inagaki H."/>
            <person name="Ikema Y."/>
            <person name="Okamoto S."/>
            <person name="Okitani R."/>
            <person name="Kawakami T."/>
            <person name="Noguchi S."/>
            <person name="Itoh T."/>
            <person name="Shigeta K."/>
            <person name="Senba T."/>
            <person name="Matsumura K."/>
            <person name="Nakajima Y."/>
            <person name="Mizuno T."/>
            <person name="Morinaga M."/>
            <person name="Sasaki M."/>
            <person name="Togashi T."/>
            <person name="Oyama M."/>
            <person name="Hata H."/>
            <person name="Watanabe M."/>
            <person name="Komatsu T."/>
            <person name="Mizushima-Sugano J."/>
            <person name="Satoh T."/>
            <person name="Shirai Y."/>
            <person name="Takahashi Y."/>
            <person name="Nakagawa K."/>
            <person name="Okumura K."/>
            <person name="Nagase T."/>
            <person name="Nomura N."/>
            <person name="Kikuchi H."/>
            <person name="Masuho Y."/>
            <person name="Yamashita R."/>
            <person name="Nakai K."/>
            <person name="Yada T."/>
            <person name="Nakamura Y."/>
            <person name="Ohara O."/>
            <person name="Isogai T."/>
            <person name="Sugano S."/>
        </authorList>
    </citation>
    <scope>NUCLEOTIDE SEQUENCE [LARGE SCALE MRNA]</scope>
</reference>
<reference key="5">
    <citation type="submission" date="2003-05" db="EMBL/GenBank/DDBJ databases">
        <title>Cloning of human full-length CDSs in BD Creator(TM) system donor vector.</title>
        <authorList>
            <person name="Kalnine N."/>
            <person name="Chen X."/>
            <person name="Rolfs A."/>
            <person name="Halleck A."/>
            <person name="Hines L."/>
            <person name="Eisenstein S."/>
            <person name="Koundinya M."/>
            <person name="Raphael J."/>
            <person name="Moreira D."/>
            <person name="Kelley T."/>
            <person name="LaBaer J."/>
            <person name="Lin Y."/>
            <person name="Phelan M."/>
            <person name="Farmer A."/>
        </authorList>
    </citation>
    <scope>NUCLEOTIDE SEQUENCE [LARGE SCALE MRNA]</scope>
</reference>
<reference key="6">
    <citation type="submission" date="2004-06" db="EMBL/GenBank/DDBJ databases">
        <title>Cloning of human full open reading frames in Gateway(TM) system entry vector (pDONR201).</title>
        <authorList>
            <person name="Ebert L."/>
            <person name="Schick M."/>
            <person name="Neubert P."/>
            <person name="Schatten R."/>
            <person name="Henze S."/>
            <person name="Korn B."/>
        </authorList>
    </citation>
    <scope>NUCLEOTIDE SEQUENCE [LARGE SCALE MRNA]</scope>
</reference>
<reference key="7">
    <citation type="submission" date="2006-03" db="EMBL/GenBank/DDBJ databases">
        <authorList>
            <consortium name="NIEHS SNPs program"/>
        </authorList>
    </citation>
    <scope>NUCLEOTIDE SEQUENCE [GENOMIC DNA]</scope>
</reference>
<reference key="8">
    <citation type="submission" date="2005-07" db="EMBL/GenBank/DDBJ databases">
        <authorList>
            <person name="Mural R.J."/>
            <person name="Istrail S."/>
            <person name="Sutton G.G."/>
            <person name="Florea L."/>
            <person name="Halpern A.L."/>
            <person name="Mobarry C.M."/>
            <person name="Lippert R."/>
            <person name="Walenz B."/>
            <person name="Shatkay H."/>
            <person name="Dew I."/>
            <person name="Miller J.R."/>
            <person name="Flanigan M.J."/>
            <person name="Edwards N.J."/>
            <person name="Bolanos R."/>
            <person name="Fasulo D."/>
            <person name="Halldorsson B.V."/>
            <person name="Hannenhalli S."/>
            <person name="Turner R."/>
            <person name="Yooseph S."/>
            <person name="Lu F."/>
            <person name="Nusskern D.R."/>
            <person name="Shue B.C."/>
            <person name="Zheng X.H."/>
            <person name="Zhong F."/>
            <person name="Delcher A.L."/>
            <person name="Huson D.H."/>
            <person name="Kravitz S.A."/>
            <person name="Mouchard L."/>
            <person name="Reinert K."/>
            <person name="Remington K.A."/>
            <person name="Clark A.G."/>
            <person name="Waterman M.S."/>
            <person name="Eichler E.E."/>
            <person name="Adams M.D."/>
            <person name="Hunkapiller M.W."/>
            <person name="Myers E.W."/>
            <person name="Venter J.C."/>
        </authorList>
    </citation>
    <scope>NUCLEOTIDE SEQUENCE [LARGE SCALE GENOMIC DNA]</scope>
</reference>
<reference key="9">
    <citation type="journal article" date="2004" name="Genome Res.">
        <title>The status, quality, and expansion of the NIH full-length cDNA project: the Mammalian Gene Collection (MGC).</title>
        <authorList>
            <consortium name="The MGC Project Team"/>
        </authorList>
    </citation>
    <scope>NUCLEOTIDE SEQUENCE [LARGE SCALE MRNA]</scope>
    <source>
        <tissue>Lung</tissue>
    </source>
</reference>
<reference key="10">
    <citation type="journal article" date="1997" name="EMBO J.">
        <title>FLICE is activated by association with the CD95 death-inducing signaling complex (DISC).</title>
        <authorList>
            <person name="Medema J.P."/>
            <person name="Scaffidi C."/>
            <person name="Kischkel F.C."/>
            <person name="Shevchenko A."/>
            <person name="Mann M."/>
            <person name="Krammer P.H."/>
            <person name="Peter M.E."/>
        </authorList>
    </citation>
    <scope>FUNCTION</scope>
    <scope>IDENTIFICATION IN DISC COMPLEX</scope>
</reference>
<reference key="11">
    <citation type="journal article" date="1999" name="Oncogene">
        <title>PED/PEA-15: an anti-apoptotic molecule that regulates FAS/TNFR1-induced apoptosis.</title>
        <authorList>
            <person name="Condorelli G."/>
            <person name="Vigliotta G."/>
            <person name="Cafieri A."/>
            <person name="Trencia A."/>
            <person name="Andalo P."/>
            <person name="Oriente F."/>
            <person name="Miele C."/>
            <person name="Caruso M."/>
            <person name="Formisano P."/>
            <person name="Beguinot F."/>
        </authorList>
    </citation>
    <scope>INTERACTION WITH PEA15</scope>
</reference>
<reference key="12">
    <citation type="journal article" date="2000" name="Biochim. Biophys. Acta">
        <title>LRDD, a novel leucine rich repeat and death domain containing protein.</title>
        <authorList>
            <person name="Telliez J.-B."/>
            <person name="Bean K.M."/>
            <person name="Lin L.-L."/>
        </authorList>
    </citation>
    <scope>INTERACTION WITH PIDD1</scope>
</reference>
<reference key="13">
    <citation type="journal article" date="2000" name="J. Exp. Med.">
        <title>FIST/HIPK3: a Fas/FADD-interacting serine/threonine kinase that induces FADD phosphorylation and inhibits Fas-mediated Jun NH2-terminal kinase activation.</title>
        <authorList>
            <person name="Rochat-Steiner V."/>
            <person name="Becker K."/>
            <person name="Micheau O."/>
            <person name="Schneider P."/>
            <person name="Burns K."/>
            <person name="Tschopp J."/>
        </authorList>
    </citation>
    <scope>IDENTIFICATION IN A COMPLEX WITH HIPK3 AND FAS</scope>
    <scope>PHOSPHORYLATION AT SER-194</scope>
</reference>
<reference key="14">
    <citation type="journal article" date="2001" name="Virology">
        <title>Molluscum contagiosum virus inhibitors of apoptosis: The MC159 v-FLIP protein blocks Fas-induced activation of procaspases and degradation of the related MC160 protein.</title>
        <authorList>
            <person name="Shisler J.L."/>
            <person name="Moss B."/>
        </authorList>
    </citation>
    <scope>INTERACTION WITH MOLLUSCUM CONTAGIOSUM VIRUS PROTEIN MC159L AND MC160L (MICROBIAL INFECTION)</scope>
</reference>
<reference key="15">
    <citation type="journal article" date="2003" name="Proc. Natl. Acad. Sci. U.S.A.">
        <title>Fas-associated death domain protein interacts with methyl-CpG binding domain protein 4: a potential link between genome surveillance and apoptosis.</title>
        <authorList>
            <person name="Screaton R.A."/>
            <person name="Kiessling S."/>
            <person name="Sansom O.J."/>
            <person name="Millar C.B."/>
            <person name="Maddison K."/>
            <person name="Bird A."/>
            <person name="Clarke A.R."/>
            <person name="Frisch S.M."/>
        </authorList>
    </citation>
    <scope>INTERACTION WITH MBD4</scope>
</reference>
<reference key="16">
    <citation type="journal article" date="2005" name="Nat. Immunol.">
        <title>IPS-1, an adaptor triggering RIG-I- and Mda5-mediated type I interferon induction.</title>
        <authorList>
            <person name="Kawai T."/>
            <person name="Takahashi K."/>
            <person name="Sato S."/>
            <person name="Coban C."/>
            <person name="Kumar H."/>
            <person name="Kato H."/>
            <person name="Ishii K.J."/>
            <person name="Takeuchi O."/>
            <person name="Akira S."/>
        </authorList>
    </citation>
    <scope>INTERACTION WITH MAVS</scope>
</reference>
<reference key="17">
    <citation type="journal article" date="2008" name="Cell Death Differ.">
        <title>Identification of an antiapoptotic protein complex at death receptors.</title>
        <authorList>
            <person name="Sun M."/>
            <person name="Song L."/>
            <person name="Li Y."/>
            <person name="Zhou T."/>
            <person name="Jope R.S."/>
        </authorList>
    </citation>
    <scope>INTERACTION WITH TNFRSF10B</scope>
</reference>
<reference key="18">
    <citation type="journal article" date="2008" name="J. Virol.">
        <title>The interaction between human papillomavirus type 16 and FADD is mediated by a novel E6 binding domain.</title>
        <authorList>
            <person name="Tungteakkhun S.S."/>
            <person name="Filippova M."/>
            <person name="Neidigh J.W."/>
            <person name="Fodor N."/>
            <person name="Duerksen-Hughes P.J."/>
        </authorList>
    </citation>
    <scope>INTERACTION WITH HUMAN PAPILLOMAVIRUS 16/HPV16 PROTEIN E6 (MICROBIAL INFECTION)</scope>
</reference>
<reference key="19">
    <citation type="journal article" date="2009" name="Anal. Chem.">
        <title>Lys-N and trypsin cover complementary parts of the phosphoproteome in a refined SCX-based approach.</title>
        <authorList>
            <person name="Gauci S."/>
            <person name="Helbig A.O."/>
            <person name="Slijper M."/>
            <person name="Krijgsveld J."/>
            <person name="Heck A.J."/>
            <person name="Mohammed S."/>
        </authorList>
    </citation>
    <scope>IDENTIFICATION BY MASS SPECTROMETRY [LARGE SCALE ANALYSIS]</scope>
</reference>
<reference key="20">
    <citation type="journal article" date="2009" name="Sci. Signal.">
        <title>Quantitative phosphoproteomic analysis of T cell receptor signaling reveals system-wide modulation of protein-protein interactions.</title>
        <authorList>
            <person name="Mayya V."/>
            <person name="Lundgren D.H."/>
            <person name="Hwang S.-I."/>
            <person name="Rezaul K."/>
            <person name="Wu L."/>
            <person name="Eng J.K."/>
            <person name="Rodionov V."/>
            <person name="Han D.K."/>
        </authorList>
    </citation>
    <scope>PHOSPHORYLATION [LARGE SCALE ANALYSIS] AT SER-194</scope>
    <scope>IDENTIFICATION BY MASS SPECTROMETRY [LARGE SCALE ANALYSIS]</scope>
    <source>
        <tissue>Leukemic T-cell</tissue>
    </source>
</reference>
<reference key="21">
    <citation type="journal article" date="2010" name="Am. J. Hum. Genet.">
        <title>Whole-exome-sequencing-based discovery of human FADD deficiency.</title>
        <authorList>
            <person name="Bolze A."/>
            <person name="Byun M."/>
            <person name="McDonald D."/>
            <person name="Morgan N.V."/>
            <person name="Abhyankar A."/>
            <person name="Premkumar L."/>
            <person name="Puel A."/>
            <person name="Bacon C.M."/>
            <person name="Rieux-Laucat F."/>
            <person name="Pang K."/>
            <person name="Britland A."/>
            <person name="Abel L."/>
            <person name="Cant A."/>
            <person name="Maher E.R."/>
            <person name="Riedl S.J."/>
            <person name="Hambleton S."/>
            <person name="Casanova J.L."/>
        </authorList>
    </citation>
    <scope>FUNCTION IN INTERFERON-MEDIATED IMMUNITY</scope>
    <scope>INTERACTION WITH FAS</scope>
    <scope>VARIANT IEHDCM TRP-105</scope>
    <scope>CHARACTERIZATION OF VARIANT IEHDCM TRP-105</scope>
</reference>
<reference key="22">
    <citation type="journal article" date="2010" name="Sci. Signal.">
        <title>Quantitative phosphoproteomics reveals widespread full phosphorylation site occupancy during mitosis.</title>
        <authorList>
            <person name="Olsen J.V."/>
            <person name="Vermeulen M."/>
            <person name="Santamaria A."/>
            <person name="Kumar C."/>
            <person name="Miller M.L."/>
            <person name="Jensen L.J."/>
            <person name="Gnad F."/>
            <person name="Cox J."/>
            <person name="Jensen T.S."/>
            <person name="Nigg E.A."/>
            <person name="Brunak S."/>
            <person name="Mann M."/>
        </authorList>
    </citation>
    <scope>IDENTIFICATION BY MASS SPECTROMETRY [LARGE SCALE ANALYSIS]</scope>
    <source>
        <tissue>Cervix carcinoma</tissue>
    </source>
</reference>
<reference key="23">
    <citation type="journal article" date="2011" name="BMC Syst. Biol.">
        <title>Initial characterization of the human central proteome.</title>
        <authorList>
            <person name="Burkard T.R."/>
            <person name="Planyavsky M."/>
            <person name="Kaupe I."/>
            <person name="Breitwieser F.P."/>
            <person name="Buerckstuemmer T."/>
            <person name="Bennett K.L."/>
            <person name="Superti-Furga G."/>
            <person name="Colinge J."/>
        </authorList>
    </citation>
    <scope>IDENTIFICATION BY MASS SPECTROMETRY [LARGE SCALE ANALYSIS]</scope>
</reference>
<reference key="24">
    <citation type="journal article" date="2011" name="Sci. Signal.">
        <title>System-wide temporal characterization of the proteome and phosphoproteome of human embryonic stem cell differentiation.</title>
        <authorList>
            <person name="Rigbolt K.T."/>
            <person name="Prokhorova T.A."/>
            <person name="Akimov V."/>
            <person name="Henningsen J."/>
            <person name="Johansen P.T."/>
            <person name="Kratchmarova I."/>
            <person name="Kassem M."/>
            <person name="Mann M."/>
            <person name="Olsen J.V."/>
            <person name="Blagoev B."/>
        </authorList>
    </citation>
    <scope>PHOSPHORYLATION [LARGE SCALE ANALYSIS] AT SER-194</scope>
    <scope>IDENTIFICATION BY MASS SPECTROMETRY [LARGE SCALE ANALYSIS]</scope>
</reference>
<reference key="25">
    <citation type="journal article" date="2013" name="PLoS Pathog.">
        <title>DDX24 negatively regulates cytosolic RNA-mediated innate immune signaling.</title>
        <authorList>
            <person name="Ma Z."/>
            <person name="Moore R."/>
            <person name="Xu X."/>
            <person name="Barber G.N."/>
        </authorList>
    </citation>
    <scope>FUNCTION</scope>
    <scope>INTERACTION WITH DDX24</scope>
    <scope>SUBCELLULAR LOCATION</scope>
</reference>
<reference key="26">
    <citation type="journal article" date="2013" name="J. Proteome Res.">
        <title>Toward a comprehensive characterization of a human cancer cell phosphoproteome.</title>
        <authorList>
            <person name="Zhou H."/>
            <person name="Di Palma S."/>
            <person name="Preisinger C."/>
            <person name="Peng M."/>
            <person name="Polat A.N."/>
            <person name="Heck A.J."/>
            <person name="Mohammed S."/>
        </authorList>
    </citation>
    <scope>PHOSPHORYLATION [LARGE SCALE ANALYSIS] AT SER-194</scope>
    <scope>IDENTIFICATION BY MASS SPECTROMETRY [LARGE SCALE ANALYSIS]</scope>
    <source>
        <tissue>Erythroleukemia</tissue>
    </source>
</reference>
<reference key="27">
    <citation type="journal article" date="2013" name="Nature">
        <title>Pathogen blocks host death receptor signalling by arginine GlcNAcylation of death domains.</title>
        <authorList>
            <person name="Li S."/>
            <person name="Zhang L."/>
            <person name="Yao Q."/>
            <person name="Li L."/>
            <person name="Dong N."/>
            <person name="Rong J."/>
            <person name="Gao W."/>
            <person name="Ding X."/>
            <person name="Sun L."/>
            <person name="Chen X."/>
            <person name="Chen S."/>
            <person name="Shao F."/>
        </authorList>
    </citation>
    <scope>FUNCTION</scope>
    <scope>GLYCOSYLATION AT ARG-117 (MICROBIAL INFECTION)</scope>
</reference>
<reference key="28">
    <citation type="journal article" date="2013" name="Nature">
        <title>A type III effector antagonizes death receptor signalling during bacterial gut infection.</title>
        <authorList>
            <person name="Pearson J.S."/>
            <person name="Giogha C."/>
            <person name="Ong S.Y."/>
            <person name="Kennedy C.L."/>
            <person name="Kelly M."/>
            <person name="Robinson K.S."/>
            <person name="Lung T.W."/>
            <person name="Mansell A."/>
            <person name="Riedmaier P."/>
            <person name="Oates C.V."/>
            <person name="Zaid A."/>
            <person name="Muehlen S."/>
            <person name="Crepin V.F."/>
            <person name="Marches O."/>
            <person name="Ang C.S."/>
            <person name="Williamson N.A."/>
            <person name="O'Reilly L.A."/>
            <person name="Bankovacki A."/>
            <person name="Nachbur U."/>
            <person name="Infusini G."/>
            <person name="Webb A.I."/>
            <person name="Silke J."/>
            <person name="Strasser A."/>
            <person name="Frankel G."/>
            <person name="Hartland E.L."/>
        </authorList>
    </citation>
    <scope>FUNCTION</scope>
    <scope>GLYCOSYLATION AT ARG-117 (MICROBIAL INFECTION)</scope>
    <scope>MUTAGENESIS OF ARG-117</scope>
</reference>
<reference key="29">
    <citation type="journal article" date="2017" name="Infect. Immun.">
        <title>SseK1 and SseK3 type III secretion system effectors inhibit NF-kappaB signaling and necroptotic cell death in salmonella-infected macrophages.</title>
        <authorList>
            <person name="Guenster R.A."/>
            <person name="Matthews S.A."/>
            <person name="Holden D.W."/>
            <person name="Thurston T.L.M."/>
        </authorList>
    </citation>
    <scope>GLYCOSYLATION (MICROBIAL INFECTION)</scope>
</reference>
<reference key="30">
    <citation type="journal article" date="2017" name="J. Biol. Chem.">
        <title>The bacterial arginine glycosyltransferase effector NleB preferentially modifies Fas-associated death domain protein (FADD).</title>
        <authorList>
            <person name="Scott N.E."/>
            <person name="Giogha C."/>
            <person name="Pollock G.L."/>
            <person name="Kennedy C.L."/>
            <person name="Webb A.I."/>
            <person name="Williamson N.A."/>
            <person name="Pearson J.S."/>
            <person name="Hartland E.L."/>
        </authorList>
    </citation>
    <scope>GLYCOSYLATION AT ARG-117 (MICROBIAL INFECTION)</scope>
</reference>
<reference key="31">
    <citation type="journal article" date="1998" name="Nature">
        <title>NMR structure and mutagenesis of the FADD (Mort1) death-effector domain.</title>
        <authorList>
            <person name="Eberstadt M."/>
            <person name="Huang B."/>
            <person name="Chen Z."/>
            <person name="Meadows R.P."/>
            <person name="Ng S.C."/>
            <person name="Zheng L."/>
            <person name="Lenardo M.J."/>
            <person name="Fesik S.W."/>
        </authorList>
    </citation>
    <scope>STRUCTURE BY NMR OF 1-83</scope>
</reference>
<reference key="32">
    <citation type="journal article" date="2000" name="J. Mol. Biol.">
        <title>The three-dimensional solution structure and dynamic properties of the human FADD death domain.</title>
        <authorList>
            <person name="Berglund H."/>
            <person name="Olerenshaw D."/>
            <person name="Sankar A."/>
            <person name="Federwisch M."/>
            <person name="McDonald N.Q."/>
            <person name="Driscoll P.C."/>
        </authorList>
    </citation>
    <scope>STRUCTURE BY NMR OF 93-192</scope>
</reference>
<reference key="33">
    <citation type="journal article" date="2006" name="Mol. Cell">
        <title>The structure of FADD and its mode of interaction with procaspase-8.</title>
        <authorList>
            <person name="Carrington P.E."/>
            <person name="Sandu C."/>
            <person name="Wei Y."/>
            <person name="Hill J.M."/>
            <person name="Morisawa G."/>
            <person name="Huang T."/>
            <person name="Gavathiotis E."/>
            <person name="Wei Y."/>
            <person name="Werner M.H."/>
        </authorList>
    </citation>
    <scope>STRUCTURE BY NMR OF 2-191</scope>
    <scope>FUNCTION</scope>
    <scope>INTERACTION WITH FAS AND CASP8</scope>
    <scope>MUTAGENESIS OF SER-12; PHE-25; LYS-33; ARG-38; ASP-44 AND GLU-51</scope>
</reference>
<reference key="34">
    <citation type="journal article" date="2009" name="Nature">
        <title>The Fas-FADD death domain complex structure unravels signalling by receptor clustering.</title>
        <authorList>
            <person name="Scott F.L."/>
            <person name="Stec B."/>
            <person name="Pop C."/>
            <person name="Dobaczewska M.K."/>
            <person name="Lee J.J."/>
            <person name="Monosov E."/>
            <person name="Robinson H."/>
            <person name="Salvesen G.S."/>
            <person name="Schwarzenbacher R."/>
            <person name="Riedl S.J."/>
        </authorList>
    </citation>
    <scope>X-RAY CRYSTALLOGRAPHY (2.73 ANGSTROMS) OF 93-208 IN COMPLEX WITH FAS</scope>
    <scope>FUNCTION</scope>
    <scope>SUBUNIT</scope>
    <scope>ELECTRON MICROSCOPY</scope>
    <scope>DOMAIN</scope>
    <scope>MUTAGENESIS OF LEU-172 AND LEU-176</scope>
</reference>
<reference key="35">
    <citation type="journal article" date="2010" name="Nat. Struct. Mol. Biol.">
        <title>The Fas-FADD death domain complex structure reveals the basis of DISC assembly and disease mutations.</title>
        <authorList>
            <person name="Wang L."/>
            <person name="Yang J.K."/>
            <person name="Kabaleeswaran V."/>
            <person name="Rice A.J."/>
            <person name="Cruz A.C."/>
            <person name="Park A.Y."/>
            <person name="Yin Q."/>
            <person name="Damko E."/>
            <person name="Jang S.B."/>
            <person name="Raunser S."/>
            <person name="Robinson C.V."/>
            <person name="Siegel R.M."/>
            <person name="Walz T."/>
            <person name="Wu H."/>
        </authorList>
    </citation>
    <scope>X-RAY CRYSTALLOGRAPHY (6.80 ANGSTROMS) OF 93-184 IN COMPLEX WITH FAS</scope>
    <scope>ELECTRON MICROSCOPY</scope>
    <scope>FUNCTION</scope>
    <scope>IDENTIFICATION BY MASS SPECTROMETRY</scope>
    <scope>SUBUNIT</scope>
    <scope>MUTAGENESIS OF ARG-117; ASP-123; ARG-135; ARG-142; LEU-172 AND ASP-175</scope>
</reference>
<reference evidence="31" key="36">
    <citation type="journal article" date="2019" name="Mol. Cell">
        <title>Structural and functional insights into host death domains inactivation by the bacterial arginine GlcNAcyltransferase effector.</title>
        <authorList>
            <person name="Ding J."/>
            <person name="Pan X."/>
            <person name="Du L."/>
            <person name="Yao Q."/>
            <person name="Xue J."/>
            <person name="Yao H."/>
            <person name="Wang D.C."/>
            <person name="Li S."/>
            <person name="Shao F."/>
        </authorList>
    </citation>
    <scope>X-RAY CRYSTALLOGRAPHY (1.87 ANGSTROMS) OF 93-184 IN COMPLEX WITH E.COLI PROTEIN NLEB1</scope>
    <scope>GLYCOSYLATION AT ARG-117 (MICROBIAL INFECTION)</scope>
    <scope>MUTAGENESIS OF ARG-117</scope>
</reference>
<feature type="chain" id="PRO_0000191279" description="FAS-associated death domain protein">
    <location>
        <begin position="1"/>
        <end position="208"/>
    </location>
</feature>
<feature type="domain" description="DED" evidence="3">
    <location>
        <begin position="3"/>
        <end position="81"/>
    </location>
</feature>
<feature type="domain" description="Death" evidence="2">
    <location>
        <begin position="97"/>
        <end position="181"/>
    </location>
</feature>
<feature type="region of interest" description="Disordered" evidence="4">
    <location>
        <begin position="187"/>
        <end position="208"/>
    </location>
</feature>
<feature type="modified residue" description="Phosphoserine" evidence="7 32 33 34">
    <location>
        <position position="194"/>
    </location>
</feature>
<feature type="glycosylation site" description="(Microbial infection) N-beta-linked (GlcNAc) arginine" evidence="18 21 22 29 31">
    <location>
        <position position="117"/>
    </location>
</feature>
<feature type="sequence variant" id="VAR_065124" description="In IEHDCM; reduced folding stability as measured by differential scanning calorimetry of the mutant protein; impairs interaction with FAS; dbSNP:rs387906839." evidence="16">
    <original>C</original>
    <variation>W</variation>
    <location>
        <position position="105"/>
    </location>
</feature>
<feature type="mutagenesis site" description="Loss of interaction with CASP8." evidence="11">
    <original>S</original>
    <variation>R</variation>
    <location>
        <position position="12"/>
    </location>
</feature>
<feature type="mutagenesis site" description="Loss of interaction with FAS. Loss of self-association. Abolishes induction of apoptosis." evidence="11">
    <original>F</original>
    <variation>R</variation>
    <location>
        <position position="25"/>
    </location>
</feature>
<feature type="mutagenesis site" description="Loss of self-association." evidence="11">
    <original>K</original>
    <variation>E</variation>
    <location>
        <position position="33"/>
    </location>
</feature>
<feature type="mutagenesis site" description="Loss of interaction with CASP8." evidence="11">
    <original>R</original>
    <variation>A</variation>
    <location>
        <position position="38"/>
    </location>
</feature>
<feature type="mutagenesis site" description="Loss of interaction with CASP8. Abolishes induction of apoptosis. Decreased interaction with FAS." evidence="11">
    <original>D</original>
    <variation>R</variation>
    <location>
        <position position="44"/>
    </location>
</feature>
<feature type="mutagenesis site" description="Loss of interaction with CASP8." evidence="11">
    <original>E</original>
    <variation>R</variation>
    <location>
        <position position="51"/>
    </location>
</feature>
<feature type="mutagenesis site" description="Abolished GlcNAcylation by E.coli NleB1." evidence="17 22">
    <original>R</original>
    <variation>A</variation>
    <location>
        <position position="117"/>
    </location>
</feature>
<feature type="mutagenesis site" description="Loss of interaction with FAS." evidence="15">
    <original>R</original>
    <variation>E</variation>
    <location>
        <position position="117"/>
    </location>
</feature>
<feature type="mutagenesis site" description="Loss of interaction with FAS." evidence="23">
    <original>V</original>
    <variation>N</variation>
    <location>
        <position position="121"/>
    </location>
</feature>
<feature type="mutagenesis site" description="Strongly decreased interaction with FAS." evidence="15">
    <original>D</original>
    <variation>R</variation>
    <location>
        <position position="123"/>
    </location>
</feature>
<feature type="mutagenesis site" description="Strongly decreased interaction with FAS." evidence="15">
    <original>R</original>
    <variation>E</variation>
    <location>
        <position position="135"/>
    </location>
</feature>
<feature type="mutagenesis site" description="Decreased interaction with FAS." evidence="15">
    <original>R</original>
    <variation>E</variation>
    <location>
        <position position="142"/>
    </location>
</feature>
<feature type="mutagenesis site" description="Loss of interaction with FAS." evidence="14 15">
    <original>L</original>
    <variation>A</variation>
    <variation>E</variation>
    <location>
        <position position="172"/>
    </location>
</feature>
<feature type="mutagenesis site" description="Strongly decreased interaction with FAS." evidence="14 15">
    <original>L</original>
    <variation>K</variation>
    <location>
        <position position="172"/>
    </location>
</feature>
<feature type="mutagenesis site" description="Strongly decreased interaction with FAS." evidence="15">
    <original>D</original>
    <variation>K</variation>
    <location>
        <position position="175"/>
    </location>
</feature>
<feature type="mutagenesis site" description="Decreased interaction with FAS." evidence="14">
    <original>L</original>
    <variation>E</variation>
    <location>
        <position position="176"/>
    </location>
</feature>
<feature type="sequence conflict" description="In Ref. 2; CAA59197." evidence="28" ref="2">
    <original>G</original>
    <variation>V</variation>
    <location>
        <position position="32"/>
    </location>
</feature>
<feature type="helix" evidence="39">
    <location>
        <begin position="2"/>
        <end position="13"/>
    </location>
</feature>
<feature type="helix" evidence="39">
    <location>
        <begin position="17"/>
        <end position="27"/>
    </location>
</feature>
<feature type="helix" evidence="39">
    <location>
        <begin position="33"/>
        <end position="38"/>
    </location>
</feature>
<feature type="helix" evidence="39">
    <location>
        <begin position="42"/>
        <end position="51"/>
    </location>
</feature>
<feature type="helix" evidence="39">
    <location>
        <begin position="61"/>
        <end position="69"/>
    </location>
</feature>
<feature type="helix" evidence="39">
    <location>
        <begin position="73"/>
        <end position="83"/>
    </location>
</feature>
<feature type="strand" evidence="35">
    <location>
        <begin position="91"/>
        <end position="93"/>
    </location>
</feature>
<feature type="helix" evidence="38">
    <location>
        <begin position="97"/>
        <end position="107"/>
    </location>
</feature>
<feature type="strand" evidence="36">
    <location>
        <begin position="109"/>
        <end position="111"/>
    </location>
</feature>
<feature type="helix" evidence="38">
    <location>
        <begin position="112"/>
        <end position="118"/>
    </location>
</feature>
<feature type="helix" evidence="38">
    <location>
        <begin position="123"/>
        <end position="132"/>
    </location>
</feature>
<feature type="strand" evidence="37">
    <location>
        <begin position="133"/>
        <end position="135"/>
    </location>
</feature>
<feature type="helix" evidence="38">
    <location>
        <begin position="137"/>
        <end position="152"/>
    </location>
</feature>
<feature type="helix" evidence="38">
    <location>
        <begin position="153"/>
        <end position="155"/>
    </location>
</feature>
<feature type="helix" evidence="38">
    <location>
        <begin position="158"/>
        <end position="167"/>
    </location>
</feature>
<feature type="helix" evidence="38">
    <location>
        <begin position="171"/>
        <end position="181"/>
    </location>
</feature>
<feature type="turn" evidence="36">
    <location>
        <begin position="186"/>
        <end position="189"/>
    </location>
</feature>
<organism>
    <name type="scientific">Homo sapiens</name>
    <name type="common">Human</name>
    <dbReference type="NCBI Taxonomy" id="9606"/>
    <lineage>
        <taxon>Eukaryota</taxon>
        <taxon>Metazoa</taxon>
        <taxon>Chordata</taxon>
        <taxon>Craniata</taxon>
        <taxon>Vertebrata</taxon>
        <taxon>Euteleostomi</taxon>
        <taxon>Mammalia</taxon>
        <taxon>Eutheria</taxon>
        <taxon>Euarchontoglires</taxon>
        <taxon>Primates</taxon>
        <taxon>Haplorrhini</taxon>
        <taxon>Catarrhini</taxon>
        <taxon>Hominidae</taxon>
        <taxon>Homo</taxon>
    </lineage>
</organism>